<accession>A1RED2</accession>
<keyword id="KW-0687">Ribonucleoprotein</keyword>
<keyword id="KW-0689">Ribosomal protein</keyword>
<comment type="subunit">
    <text evidence="1">Part of the 50S ribosomal subunit.</text>
</comment>
<comment type="similarity">
    <text evidence="1">Belongs to the universal ribosomal protein uL30 family.</text>
</comment>
<evidence type="ECO:0000255" key="1">
    <source>
        <dbReference type="HAMAP-Rule" id="MF_01371"/>
    </source>
</evidence>
<evidence type="ECO:0000305" key="2"/>
<name>RL30_SHESW</name>
<gene>
    <name evidence="1" type="primary">rpmD</name>
    <name type="ordered locus">Sputw3181_0174</name>
</gene>
<reference key="1">
    <citation type="submission" date="2006-12" db="EMBL/GenBank/DDBJ databases">
        <title>Complete sequence of Shewanella sp. W3-18-1.</title>
        <authorList>
            <consortium name="US DOE Joint Genome Institute"/>
            <person name="Copeland A."/>
            <person name="Lucas S."/>
            <person name="Lapidus A."/>
            <person name="Barry K."/>
            <person name="Detter J.C."/>
            <person name="Glavina del Rio T."/>
            <person name="Hammon N."/>
            <person name="Israni S."/>
            <person name="Dalin E."/>
            <person name="Tice H."/>
            <person name="Pitluck S."/>
            <person name="Chain P."/>
            <person name="Malfatti S."/>
            <person name="Shin M."/>
            <person name="Vergez L."/>
            <person name="Schmutz J."/>
            <person name="Larimer F."/>
            <person name="Land M."/>
            <person name="Hauser L."/>
            <person name="Kyrpides N."/>
            <person name="Lykidis A."/>
            <person name="Tiedje J."/>
            <person name="Richardson P."/>
        </authorList>
    </citation>
    <scope>NUCLEOTIDE SEQUENCE [LARGE SCALE GENOMIC DNA]</scope>
    <source>
        <strain>W3-18-1</strain>
    </source>
</reference>
<dbReference type="EMBL" id="CP000503">
    <property type="protein sequence ID" value="ABM23027.1"/>
    <property type="molecule type" value="Genomic_DNA"/>
</dbReference>
<dbReference type="RefSeq" id="WP_006083582.1">
    <property type="nucleotide sequence ID" value="NC_008750.1"/>
</dbReference>
<dbReference type="SMR" id="A1RED2"/>
<dbReference type="GeneID" id="75190600"/>
<dbReference type="KEGG" id="shw:Sputw3181_0174"/>
<dbReference type="HOGENOM" id="CLU_131047_1_4_6"/>
<dbReference type="Proteomes" id="UP000002597">
    <property type="component" value="Chromosome"/>
</dbReference>
<dbReference type="GO" id="GO:0022625">
    <property type="term" value="C:cytosolic large ribosomal subunit"/>
    <property type="evidence" value="ECO:0007669"/>
    <property type="project" value="TreeGrafter"/>
</dbReference>
<dbReference type="GO" id="GO:0003735">
    <property type="term" value="F:structural constituent of ribosome"/>
    <property type="evidence" value="ECO:0007669"/>
    <property type="project" value="InterPro"/>
</dbReference>
<dbReference type="GO" id="GO:0006412">
    <property type="term" value="P:translation"/>
    <property type="evidence" value="ECO:0007669"/>
    <property type="project" value="UniProtKB-UniRule"/>
</dbReference>
<dbReference type="CDD" id="cd01658">
    <property type="entry name" value="Ribosomal_L30"/>
    <property type="match status" value="1"/>
</dbReference>
<dbReference type="FunFam" id="3.30.1390.20:FF:000001">
    <property type="entry name" value="50S ribosomal protein L30"/>
    <property type="match status" value="1"/>
</dbReference>
<dbReference type="Gene3D" id="3.30.1390.20">
    <property type="entry name" value="Ribosomal protein L30, ferredoxin-like fold domain"/>
    <property type="match status" value="1"/>
</dbReference>
<dbReference type="HAMAP" id="MF_01371_B">
    <property type="entry name" value="Ribosomal_uL30_B"/>
    <property type="match status" value="1"/>
</dbReference>
<dbReference type="InterPro" id="IPR036919">
    <property type="entry name" value="Ribo_uL30_ferredoxin-like_sf"/>
</dbReference>
<dbReference type="InterPro" id="IPR005996">
    <property type="entry name" value="Ribosomal_uL30_bac-type"/>
</dbReference>
<dbReference type="InterPro" id="IPR018038">
    <property type="entry name" value="Ribosomal_uL30_CS"/>
</dbReference>
<dbReference type="InterPro" id="IPR016082">
    <property type="entry name" value="Ribosomal_uL30_ferredoxin-like"/>
</dbReference>
<dbReference type="NCBIfam" id="TIGR01308">
    <property type="entry name" value="rpmD_bact"/>
    <property type="match status" value="1"/>
</dbReference>
<dbReference type="PANTHER" id="PTHR15892:SF2">
    <property type="entry name" value="LARGE RIBOSOMAL SUBUNIT PROTEIN UL30M"/>
    <property type="match status" value="1"/>
</dbReference>
<dbReference type="PANTHER" id="PTHR15892">
    <property type="entry name" value="MITOCHONDRIAL RIBOSOMAL PROTEIN L30"/>
    <property type="match status" value="1"/>
</dbReference>
<dbReference type="Pfam" id="PF00327">
    <property type="entry name" value="Ribosomal_L30"/>
    <property type="match status" value="1"/>
</dbReference>
<dbReference type="PIRSF" id="PIRSF002211">
    <property type="entry name" value="Ribosomal_L30_bac-type"/>
    <property type="match status" value="1"/>
</dbReference>
<dbReference type="SUPFAM" id="SSF55129">
    <property type="entry name" value="Ribosomal protein L30p/L7e"/>
    <property type="match status" value="1"/>
</dbReference>
<dbReference type="PROSITE" id="PS00634">
    <property type="entry name" value="RIBOSOMAL_L30"/>
    <property type="match status" value="1"/>
</dbReference>
<feature type="chain" id="PRO_1000056110" description="Large ribosomal subunit protein uL30">
    <location>
        <begin position="1"/>
        <end position="60"/>
    </location>
</feature>
<sequence length="60" mass="6683">MATKTVKVTQTKSGIGRLPKHRATLTGLGLRRIGHTVELEDTPSVRGMINKVYYMVKVED</sequence>
<organism>
    <name type="scientific">Shewanella sp. (strain W3-18-1)</name>
    <dbReference type="NCBI Taxonomy" id="351745"/>
    <lineage>
        <taxon>Bacteria</taxon>
        <taxon>Pseudomonadati</taxon>
        <taxon>Pseudomonadota</taxon>
        <taxon>Gammaproteobacteria</taxon>
        <taxon>Alteromonadales</taxon>
        <taxon>Shewanellaceae</taxon>
        <taxon>Shewanella</taxon>
    </lineage>
</organism>
<proteinExistence type="inferred from homology"/>
<protein>
    <recommendedName>
        <fullName evidence="1">Large ribosomal subunit protein uL30</fullName>
    </recommendedName>
    <alternativeName>
        <fullName evidence="2">50S ribosomal protein L30</fullName>
    </alternativeName>
</protein>